<comment type="function">
    <text evidence="1">Forms an efflux pump with AaeA. Could function as a metabolic relief valve, allowing to eliminate certain compounds when they accumulate to high levels in the cell.</text>
</comment>
<comment type="subcellular location">
    <subcellularLocation>
        <location evidence="1">Cell inner membrane</location>
        <topology evidence="1">Multi-pass membrane protein</topology>
    </subcellularLocation>
</comment>
<comment type="induction">
    <text evidence="1">Positively coregulated with aaeA and aaeX by AaeR.</text>
</comment>
<comment type="similarity">
    <text evidence="1">Belongs to the aromatic acid exporter ArAE (TC 2.A.85) family.</text>
</comment>
<proteinExistence type="inferred from homology"/>
<evidence type="ECO:0000255" key="1">
    <source>
        <dbReference type="HAMAP-Rule" id="MF_01545"/>
    </source>
</evidence>
<keyword id="KW-0997">Cell inner membrane</keyword>
<keyword id="KW-1003">Cell membrane</keyword>
<keyword id="KW-0472">Membrane</keyword>
<keyword id="KW-0812">Transmembrane</keyword>
<keyword id="KW-1133">Transmembrane helix</keyword>
<keyword id="KW-0813">Transport</keyword>
<name>AAEB_ECOLU</name>
<dbReference type="EMBL" id="CU928163">
    <property type="protein sequence ID" value="CAR14868.1"/>
    <property type="molecule type" value="Genomic_DNA"/>
</dbReference>
<dbReference type="RefSeq" id="WP_000510962.1">
    <property type="nucleotide sequence ID" value="NC_011751.1"/>
</dbReference>
<dbReference type="RefSeq" id="YP_002414373.1">
    <property type="nucleotide sequence ID" value="NC_011751.1"/>
</dbReference>
<dbReference type="SMR" id="B7NDL8"/>
<dbReference type="STRING" id="585056.ECUMN_3714"/>
<dbReference type="GeneID" id="75206090"/>
<dbReference type="KEGG" id="eum:ECUMN_3714"/>
<dbReference type="PATRIC" id="fig|585056.7.peg.3897"/>
<dbReference type="HOGENOM" id="CLU_027647_0_0_6"/>
<dbReference type="Proteomes" id="UP000007097">
    <property type="component" value="Chromosome"/>
</dbReference>
<dbReference type="GO" id="GO:0005886">
    <property type="term" value="C:plasma membrane"/>
    <property type="evidence" value="ECO:0007669"/>
    <property type="project" value="UniProtKB-SubCell"/>
</dbReference>
<dbReference type="GO" id="GO:0022857">
    <property type="term" value="F:transmembrane transporter activity"/>
    <property type="evidence" value="ECO:0007669"/>
    <property type="project" value="UniProtKB-UniRule"/>
</dbReference>
<dbReference type="GO" id="GO:0046942">
    <property type="term" value="P:carboxylic acid transport"/>
    <property type="evidence" value="ECO:0007669"/>
    <property type="project" value="InterPro"/>
</dbReference>
<dbReference type="HAMAP" id="MF_01545">
    <property type="entry name" value="AaeB"/>
    <property type="match status" value="1"/>
</dbReference>
<dbReference type="InterPro" id="IPR006726">
    <property type="entry name" value="PHBA_efflux_AaeB/fusaric-R"/>
</dbReference>
<dbReference type="InterPro" id="IPR023706">
    <property type="entry name" value="PHBA_efflux_pump_AaeB"/>
</dbReference>
<dbReference type="NCBIfam" id="NF007916">
    <property type="entry name" value="PRK10631.1"/>
    <property type="match status" value="1"/>
</dbReference>
<dbReference type="PANTHER" id="PTHR30509:SF9">
    <property type="entry name" value="MULTIDRUG RESISTANCE PROTEIN MDTO"/>
    <property type="match status" value="1"/>
</dbReference>
<dbReference type="PANTHER" id="PTHR30509">
    <property type="entry name" value="P-HYDROXYBENZOIC ACID EFFLUX PUMP SUBUNIT-RELATED"/>
    <property type="match status" value="1"/>
</dbReference>
<dbReference type="Pfam" id="PF04632">
    <property type="entry name" value="FUSC"/>
    <property type="match status" value="1"/>
</dbReference>
<gene>
    <name evidence="1" type="primary">aaeB</name>
    <name type="ordered locus">ECUMN_3714</name>
</gene>
<accession>B7NDL8</accession>
<protein>
    <recommendedName>
        <fullName evidence="1">p-hydroxybenzoic acid efflux pump subunit AaeB</fullName>
        <shortName evidence="1">pHBA efflux pump protein B</shortName>
    </recommendedName>
</protein>
<reference key="1">
    <citation type="journal article" date="2009" name="PLoS Genet.">
        <title>Organised genome dynamics in the Escherichia coli species results in highly diverse adaptive paths.</title>
        <authorList>
            <person name="Touchon M."/>
            <person name="Hoede C."/>
            <person name="Tenaillon O."/>
            <person name="Barbe V."/>
            <person name="Baeriswyl S."/>
            <person name="Bidet P."/>
            <person name="Bingen E."/>
            <person name="Bonacorsi S."/>
            <person name="Bouchier C."/>
            <person name="Bouvet O."/>
            <person name="Calteau A."/>
            <person name="Chiapello H."/>
            <person name="Clermont O."/>
            <person name="Cruveiller S."/>
            <person name="Danchin A."/>
            <person name="Diard M."/>
            <person name="Dossat C."/>
            <person name="Karoui M.E."/>
            <person name="Frapy E."/>
            <person name="Garry L."/>
            <person name="Ghigo J.M."/>
            <person name="Gilles A.M."/>
            <person name="Johnson J."/>
            <person name="Le Bouguenec C."/>
            <person name="Lescat M."/>
            <person name="Mangenot S."/>
            <person name="Martinez-Jehanne V."/>
            <person name="Matic I."/>
            <person name="Nassif X."/>
            <person name="Oztas S."/>
            <person name="Petit M.A."/>
            <person name="Pichon C."/>
            <person name="Rouy Z."/>
            <person name="Ruf C.S."/>
            <person name="Schneider D."/>
            <person name="Tourret J."/>
            <person name="Vacherie B."/>
            <person name="Vallenet D."/>
            <person name="Medigue C."/>
            <person name="Rocha E.P.C."/>
            <person name="Denamur E."/>
        </authorList>
    </citation>
    <scope>NUCLEOTIDE SEQUENCE [LARGE SCALE GENOMIC DNA]</scope>
    <source>
        <strain>UMN026 / ExPEC</strain>
    </source>
</reference>
<organism>
    <name type="scientific">Escherichia coli O17:K52:H18 (strain UMN026 / ExPEC)</name>
    <dbReference type="NCBI Taxonomy" id="585056"/>
    <lineage>
        <taxon>Bacteria</taxon>
        <taxon>Pseudomonadati</taxon>
        <taxon>Pseudomonadota</taxon>
        <taxon>Gammaproteobacteria</taxon>
        <taxon>Enterobacterales</taxon>
        <taxon>Enterobacteriaceae</taxon>
        <taxon>Escherichia</taxon>
    </lineage>
</organism>
<sequence length="655" mass="73611">MGIFSIANQHIRFAVKLATAIVLALFVGFHFQLETPRWAVLTAAIVAAGPAFAAGGEPYSGAIRYRGFLRIIGTFIGCIAGLVIIIAMIRAPLLMILVCCIWAGFCTWISSLVRIENSYAWGLAGYTALIIVITIQPEPLLTPQFAVERCSEIVIGIVCAIMADLLFSPRSIKQEVDRELESLLVAQYQLMQLCIKHGDGEVVDKAWGDLVRRTTALQGMRSNLNMESSRWARANRRLKAINTLSLTLITQSCETYLIQNTRPELITDTFREFFDTPVETAQDVHKQLKRLRRVIAWTGERETPVTIYSWVAAATRYQLLKRGVISNTKINATEEEILQGEPEVKVESAERHHAMVNFWRTTLSCILGTLFWLWTGWTSGSGAMVMIAVVTSLAMRLPNPRMVAIDFIYGTLAALPLGLLYFLVIIPNTQQSMLLLCISLAVLGFFLGIEVQKRRLGSMGALASTINIIVLDNPMTFHFSQFLDSALGQIVGCVLAFTVILLVRDKSRDRTGRVLLNQFVSAAVSAMTTNVARRKENHLPALYQQLFLLMNKFPGDLPKFRLALTMIIAHQRLRDAPIPVNEDLSAFHRQMRRTADHVISARSDDKRRRYFGQLLEELEIYQEKLRIWQAPPQVTEPVHRLAGMLHKYQHALTDS</sequence>
<feature type="chain" id="PRO_1000146736" description="p-hydroxybenzoic acid efflux pump subunit AaeB">
    <location>
        <begin position="1"/>
        <end position="655"/>
    </location>
</feature>
<feature type="transmembrane region" description="Helical" evidence="1">
    <location>
        <begin position="13"/>
        <end position="33"/>
    </location>
</feature>
<feature type="transmembrane region" description="Helical" evidence="1">
    <location>
        <begin position="38"/>
        <end position="58"/>
    </location>
</feature>
<feature type="transmembrane region" description="Helical" evidence="1">
    <location>
        <begin position="69"/>
        <end position="89"/>
    </location>
</feature>
<feature type="transmembrane region" description="Helical" evidence="1">
    <location>
        <begin position="93"/>
        <end position="113"/>
    </location>
</feature>
<feature type="transmembrane region" description="Helical" evidence="1">
    <location>
        <begin position="121"/>
        <end position="141"/>
    </location>
</feature>
<feature type="transmembrane region" description="Helical" evidence="1">
    <location>
        <begin position="152"/>
        <end position="172"/>
    </location>
</feature>
<feature type="transmembrane region" description="Helical" evidence="1">
    <location>
        <begin position="370"/>
        <end position="390"/>
    </location>
</feature>
<feature type="transmembrane region" description="Helical" evidence="1">
    <location>
        <begin position="407"/>
        <end position="427"/>
    </location>
</feature>
<feature type="transmembrane region" description="Helical" evidence="1">
    <location>
        <begin position="431"/>
        <end position="451"/>
    </location>
</feature>
<feature type="transmembrane region" description="Helical" evidence="1">
    <location>
        <begin position="459"/>
        <end position="479"/>
    </location>
</feature>
<feature type="transmembrane region" description="Helical" evidence="1">
    <location>
        <begin position="482"/>
        <end position="502"/>
    </location>
</feature>